<name>ATP6_PSE14</name>
<protein>
    <recommendedName>
        <fullName evidence="1">ATP synthase subunit a</fullName>
    </recommendedName>
    <alternativeName>
        <fullName evidence="1">ATP synthase F0 sector subunit a</fullName>
    </alternativeName>
    <alternativeName>
        <fullName evidence="1">F-ATPase subunit 6</fullName>
    </alternativeName>
</protein>
<gene>
    <name evidence="1" type="primary">atpB</name>
    <name type="ordered locus">PSPPH_5213</name>
</gene>
<reference key="1">
    <citation type="journal article" date="2005" name="J. Bacteriol.">
        <title>Whole-genome sequence analysis of Pseudomonas syringae pv. phaseolicola 1448A reveals divergence among pathovars in genes involved in virulence and transposition.</title>
        <authorList>
            <person name="Joardar V."/>
            <person name="Lindeberg M."/>
            <person name="Jackson R.W."/>
            <person name="Selengut J."/>
            <person name="Dodson R."/>
            <person name="Brinkac L.M."/>
            <person name="Daugherty S.C."/>
            <person name="DeBoy R.T."/>
            <person name="Durkin A.S."/>
            <person name="Gwinn Giglio M."/>
            <person name="Madupu R."/>
            <person name="Nelson W.C."/>
            <person name="Rosovitz M.J."/>
            <person name="Sullivan S.A."/>
            <person name="Crabtree J."/>
            <person name="Creasy T."/>
            <person name="Davidsen T.M."/>
            <person name="Haft D.H."/>
            <person name="Zafar N."/>
            <person name="Zhou L."/>
            <person name="Halpin R."/>
            <person name="Holley T."/>
            <person name="Khouri H.M."/>
            <person name="Feldblyum T.V."/>
            <person name="White O."/>
            <person name="Fraser C.M."/>
            <person name="Chatterjee A.K."/>
            <person name="Cartinhour S."/>
            <person name="Schneider D."/>
            <person name="Mansfield J.W."/>
            <person name="Collmer A."/>
            <person name="Buell R."/>
        </authorList>
    </citation>
    <scope>NUCLEOTIDE SEQUENCE [LARGE SCALE GENOMIC DNA]</scope>
    <source>
        <strain>1448A / Race 6</strain>
    </source>
</reference>
<dbReference type="EMBL" id="CP000058">
    <property type="protein sequence ID" value="AAZ34568.1"/>
    <property type="molecule type" value="Genomic_DNA"/>
</dbReference>
<dbReference type="RefSeq" id="WP_002555988.1">
    <property type="nucleotide sequence ID" value="NC_005773.3"/>
</dbReference>
<dbReference type="SMR" id="Q48BF9"/>
<dbReference type="GeneID" id="96221655"/>
<dbReference type="KEGG" id="psp:PSPPH_5213"/>
<dbReference type="eggNOG" id="COG0356">
    <property type="taxonomic scope" value="Bacteria"/>
</dbReference>
<dbReference type="HOGENOM" id="CLU_041018_1_0_6"/>
<dbReference type="Proteomes" id="UP000000551">
    <property type="component" value="Chromosome"/>
</dbReference>
<dbReference type="GO" id="GO:0005886">
    <property type="term" value="C:plasma membrane"/>
    <property type="evidence" value="ECO:0007669"/>
    <property type="project" value="UniProtKB-SubCell"/>
</dbReference>
<dbReference type="GO" id="GO:0045259">
    <property type="term" value="C:proton-transporting ATP synthase complex"/>
    <property type="evidence" value="ECO:0007669"/>
    <property type="project" value="UniProtKB-KW"/>
</dbReference>
<dbReference type="GO" id="GO:0046933">
    <property type="term" value="F:proton-transporting ATP synthase activity, rotational mechanism"/>
    <property type="evidence" value="ECO:0007669"/>
    <property type="project" value="UniProtKB-UniRule"/>
</dbReference>
<dbReference type="GO" id="GO:0042777">
    <property type="term" value="P:proton motive force-driven plasma membrane ATP synthesis"/>
    <property type="evidence" value="ECO:0007669"/>
    <property type="project" value="TreeGrafter"/>
</dbReference>
<dbReference type="CDD" id="cd00310">
    <property type="entry name" value="ATP-synt_Fo_a_6"/>
    <property type="match status" value="1"/>
</dbReference>
<dbReference type="FunFam" id="1.20.120.220:FF:000002">
    <property type="entry name" value="ATP synthase subunit a"/>
    <property type="match status" value="1"/>
</dbReference>
<dbReference type="Gene3D" id="1.20.120.220">
    <property type="entry name" value="ATP synthase, F0 complex, subunit A"/>
    <property type="match status" value="1"/>
</dbReference>
<dbReference type="HAMAP" id="MF_01393">
    <property type="entry name" value="ATP_synth_a_bact"/>
    <property type="match status" value="1"/>
</dbReference>
<dbReference type="InterPro" id="IPR045082">
    <property type="entry name" value="ATP_syn_F0_a_bact/chloroplast"/>
</dbReference>
<dbReference type="InterPro" id="IPR000568">
    <property type="entry name" value="ATP_synth_F0_asu"/>
</dbReference>
<dbReference type="InterPro" id="IPR023011">
    <property type="entry name" value="ATP_synth_F0_asu_AS"/>
</dbReference>
<dbReference type="InterPro" id="IPR035908">
    <property type="entry name" value="F0_ATP_A_sf"/>
</dbReference>
<dbReference type="NCBIfam" id="TIGR01131">
    <property type="entry name" value="ATP_synt_6_or_A"/>
    <property type="match status" value="1"/>
</dbReference>
<dbReference type="NCBIfam" id="NF004477">
    <property type="entry name" value="PRK05815.1-1"/>
    <property type="match status" value="1"/>
</dbReference>
<dbReference type="PANTHER" id="PTHR42823">
    <property type="entry name" value="ATP SYNTHASE SUBUNIT A, CHLOROPLASTIC"/>
    <property type="match status" value="1"/>
</dbReference>
<dbReference type="PANTHER" id="PTHR42823:SF3">
    <property type="entry name" value="ATP SYNTHASE SUBUNIT A, CHLOROPLASTIC"/>
    <property type="match status" value="1"/>
</dbReference>
<dbReference type="Pfam" id="PF00119">
    <property type="entry name" value="ATP-synt_A"/>
    <property type="match status" value="1"/>
</dbReference>
<dbReference type="SUPFAM" id="SSF81336">
    <property type="entry name" value="F1F0 ATP synthase subunit A"/>
    <property type="match status" value="1"/>
</dbReference>
<dbReference type="PROSITE" id="PS00449">
    <property type="entry name" value="ATPASE_A"/>
    <property type="match status" value="1"/>
</dbReference>
<proteinExistence type="inferred from homology"/>
<evidence type="ECO:0000255" key="1">
    <source>
        <dbReference type="HAMAP-Rule" id="MF_01393"/>
    </source>
</evidence>
<organism>
    <name type="scientific">Pseudomonas savastanoi pv. phaseolicola (strain 1448A / Race 6)</name>
    <name type="common">Pseudomonas syringae pv. phaseolicola (strain 1448A / Race 6)</name>
    <dbReference type="NCBI Taxonomy" id="264730"/>
    <lineage>
        <taxon>Bacteria</taxon>
        <taxon>Pseudomonadati</taxon>
        <taxon>Pseudomonadota</taxon>
        <taxon>Gammaproteobacteria</taxon>
        <taxon>Pseudomonadales</taxon>
        <taxon>Pseudomonadaceae</taxon>
        <taxon>Pseudomonas</taxon>
    </lineage>
</organism>
<accession>Q48BF9</accession>
<keyword id="KW-0066">ATP synthesis</keyword>
<keyword id="KW-0997">Cell inner membrane</keyword>
<keyword id="KW-1003">Cell membrane</keyword>
<keyword id="KW-0138">CF(0)</keyword>
<keyword id="KW-0375">Hydrogen ion transport</keyword>
<keyword id="KW-0406">Ion transport</keyword>
<keyword id="KW-0472">Membrane</keyword>
<keyword id="KW-0812">Transmembrane</keyword>
<keyword id="KW-1133">Transmembrane helix</keyword>
<keyword id="KW-0813">Transport</keyword>
<sequence length="289" mass="31759">MAEQTASGYIQHHLQNLTFGHLPNGEWGFAHTAAEAKEMGFWAFHVDTLGWSVALGLIFVLIFRMAAKKATSGQPGALQNFVEVLVDFVDGSVKDSFHGRSAVIAPLALTIFVWVFLMNAVDLVPVDWIPQLAMLISGDEHIPFRAVPTTDPNATLGMALSVFALIIFYSIKVKGIGGFIGELTLHPFGSKNLFVQALLIPVNFLLEFVTLIAKPISLALRLFGNMYAGELVFILIAVMFGSGLLWLSGLGVVLQWAWAVFHILIITLQAFIFMMLTIVYLSMAHEDNH</sequence>
<feature type="chain" id="PRO_0000362401" description="ATP synthase subunit a">
    <location>
        <begin position="1"/>
        <end position="289"/>
    </location>
</feature>
<feature type="transmembrane region" description="Helical" evidence="1">
    <location>
        <begin position="43"/>
        <end position="63"/>
    </location>
</feature>
<feature type="transmembrane region" description="Helical" evidence="1">
    <location>
        <begin position="101"/>
        <end position="121"/>
    </location>
</feature>
<feature type="transmembrane region" description="Helical" evidence="1">
    <location>
        <begin position="160"/>
        <end position="180"/>
    </location>
</feature>
<feature type="transmembrane region" description="Helical" evidence="1">
    <location>
        <begin position="193"/>
        <end position="213"/>
    </location>
</feature>
<feature type="transmembrane region" description="Helical" evidence="1">
    <location>
        <begin position="232"/>
        <end position="252"/>
    </location>
</feature>
<feature type="transmembrane region" description="Helical" evidence="1">
    <location>
        <begin position="259"/>
        <end position="279"/>
    </location>
</feature>
<comment type="function">
    <text evidence="1">Key component of the proton channel; it plays a direct role in the translocation of protons across the membrane.</text>
</comment>
<comment type="subunit">
    <text evidence="1">F-type ATPases have 2 components, CF(1) - the catalytic core - and CF(0) - the membrane proton channel. CF(1) has five subunits: alpha(3), beta(3), gamma(1), delta(1), epsilon(1). CF(0) has three main subunits: a(1), b(2) and c(9-12). The alpha and beta chains form an alternating ring which encloses part of the gamma chain. CF(1) is attached to CF(0) by a central stalk formed by the gamma and epsilon chains, while a peripheral stalk is formed by the delta and b chains.</text>
</comment>
<comment type="subcellular location">
    <subcellularLocation>
        <location evidence="1">Cell inner membrane</location>
        <topology evidence="1">Multi-pass membrane protein</topology>
    </subcellularLocation>
</comment>
<comment type="similarity">
    <text evidence="1">Belongs to the ATPase A chain family.</text>
</comment>